<name>RL34_BACAN</name>
<sequence length="44" mass="5170">MKRTYQPNKRKRSKVHGFRSRMSTANGRKVLAARRRKGRKVLSA</sequence>
<accession>Q81JG9</accession>
<accession>Q6HQ10</accession>
<accession>Q6KJF5</accession>
<reference key="1">
    <citation type="journal article" date="2003" name="Nature">
        <title>The genome sequence of Bacillus anthracis Ames and comparison to closely related bacteria.</title>
        <authorList>
            <person name="Read T.D."/>
            <person name="Peterson S.N."/>
            <person name="Tourasse N.J."/>
            <person name="Baillie L.W."/>
            <person name="Paulsen I.T."/>
            <person name="Nelson K.E."/>
            <person name="Tettelin H."/>
            <person name="Fouts D.E."/>
            <person name="Eisen J.A."/>
            <person name="Gill S.R."/>
            <person name="Holtzapple E.K."/>
            <person name="Okstad O.A."/>
            <person name="Helgason E."/>
            <person name="Rilstone J."/>
            <person name="Wu M."/>
            <person name="Kolonay J.F."/>
            <person name="Beanan M.J."/>
            <person name="Dodson R.J."/>
            <person name="Brinkac L.M."/>
            <person name="Gwinn M.L."/>
            <person name="DeBoy R.T."/>
            <person name="Madpu R."/>
            <person name="Daugherty S.C."/>
            <person name="Durkin A.S."/>
            <person name="Haft D.H."/>
            <person name="Nelson W.C."/>
            <person name="Peterson J.D."/>
            <person name="Pop M."/>
            <person name="Khouri H.M."/>
            <person name="Radune D."/>
            <person name="Benton J.L."/>
            <person name="Mahamoud Y."/>
            <person name="Jiang L."/>
            <person name="Hance I.R."/>
            <person name="Weidman J.F."/>
            <person name="Berry K.J."/>
            <person name="Plaut R.D."/>
            <person name="Wolf A.M."/>
            <person name="Watkins K.L."/>
            <person name="Nierman W.C."/>
            <person name="Hazen A."/>
            <person name="Cline R.T."/>
            <person name="Redmond C."/>
            <person name="Thwaite J.E."/>
            <person name="White O."/>
            <person name="Salzberg S.L."/>
            <person name="Thomason B."/>
            <person name="Friedlander A.M."/>
            <person name="Koehler T.M."/>
            <person name="Hanna P.C."/>
            <person name="Kolstoe A.-B."/>
            <person name="Fraser C.M."/>
        </authorList>
    </citation>
    <scope>NUCLEOTIDE SEQUENCE [LARGE SCALE GENOMIC DNA]</scope>
    <source>
        <strain>Ames / isolate Porton</strain>
    </source>
</reference>
<reference key="2">
    <citation type="submission" date="2004-01" db="EMBL/GenBank/DDBJ databases">
        <title>Complete genome sequence of Bacillus anthracis Sterne.</title>
        <authorList>
            <person name="Brettin T.S."/>
            <person name="Bruce D."/>
            <person name="Challacombe J.F."/>
            <person name="Gilna P."/>
            <person name="Han C."/>
            <person name="Hill K."/>
            <person name="Hitchcock P."/>
            <person name="Jackson P."/>
            <person name="Keim P."/>
            <person name="Longmire J."/>
            <person name="Lucas S."/>
            <person name="Okinaka R."/>
            <person name="Richardson P."/>
            <person name="Rubin E."/>
            <person name="Tice H."/>
        </authorList>
    </citation>
    <scope>NUCLEOTIDE SEQUENCE [LARGE SCALE GENOMIC DNA]</scope>
    <source>
        <strain>Sterne</strain>
    </source>
</reference>
<reference key="3">
    <citation type="journal article" date="2009" name="J. Bacteriol.">
        <title>The complete genome sequence of Bacillus anthracis Ames 'Ancestor'.</title>
        <authorList>
            <person name="Ravel J."/>
            <person name="Jiang L."/>
            <person name="Stanley S.T."/>
            <person name="Wilson M.R."/>
            <person name="Decker R.S."/>
            <person name="Read T.D."/>
            <person name="Worsham P."/>
            <person name="Keim P.S."/>
            <person name="Salzberg S.L."/>
            <person name="Fraser-Liggett C.M."/>
            <person name="Rasko D.A."/>
        </authorList>
    </citation>
    <scope>NUCLEOTIDE SEQUENCE [LARGE SCALE GENOMIC DNA]</scope>
    <source>
        <strain>Ames ancestor</strain>
    </source>
</reference>
<dbReference type="EMBL" id="AE016879">
    <property type="protein sequence ID" value="AAP29369.1"/>
    <property type="molecule type" value="Genomic_DNA"/>
</dbReference>
<dbReference type="EMBL" id="AE017334">
    <property type="protein sequence ID" value="AAT34899.1"/>
    <property type="molecule type" value="Genomic_DNA"/>
</dbReference>
<dbReference type="EMBL" id="AE017225">
    <property type="protein sequence ID" value="AAT57628.1"/>
    <property type="molecule type" value="Genomic_DNA"/>
</dbReference>
<dbReference type="RefSeq" id="NP_847883.1">
    <property type="nucleotide sequence ID" value="NC_003997.3"/>
</dbReference>
<dbReference type="RefSeq" id="WP_000831901.1">
    <property type="nucleotide sequence ID" value="NZ_WXXJ01000028.1"/>
</dbReference>
<dbReference type="RefSeq" id="YP_031578.1">
    <property type="nucleotide sequence ID" value="NC_005945.1"/>
</dbReference>
<dbReference type="SMR" id="Q81JG9"/>
<dbReference type="STRING" id="261594.GBAA_5738"/>
<dbReference type="DNASU" id="1085511"/>
<dbReference type="GeneID" id="93005634"/>
<dbReference type="KEGG" id="ban:BA_5738"/>
<dbReference type="KEGG" id="bar:GBAA_5738"/>
<dbReference type="KEGG" id="bat:BAS5341"/>
<dbReference type="PATRIC" id="fig|198094.11.peg.5699"/>
<dbReference type="eggNOG" id="COG0230">
    <property type="taxonomic scope" value="Bacteria"/>
</dbReference>
<dbReference type="HOGENOM" id="CLU_129938_2_0_9"/>
<dbReference type="OrthoDB" id="9804164at2"/>
<dbReference type="Proteomes" id="UP000000427">
    <property type="component" value="Chromosome"/>
</dbReference>
<dbReference type="Proteomes" id="UP000000594">
    <property type="component" value="Chromosome"/>
</dbReference>
<dbReference type="GO" id="GO:1990904">
    <property type="term" value="C:ribonucleoprotein complex"/>
    <property type="evidence" value="ECO:0007669"/>
    <property type="project" value="UniProtKB-KW"/>
</dbReference>
<dbReference type="GO" id="GO:0005840">
    <property type="term" value="C:ribosome"/>
    <property type="evidence" value="ECO:0007669"/>
    <property type="project" value="UniProtKB-KW"/>
</dbReference>
<dbReference type="GO" id="GO:0003735">
    <property type="term" value="F:structural constituent of ribosome"/>
    <property type="evidence" value="ECO:0007669"/>
    <property type="project" value="InterPro"/>
</dbReference>
<dbReference type="GO" id="GO:0006412">
    <property type="term" value="P:translation"/>
    <property type="evidence" value="ECO:0007669"/>
    <property type="project" value="UniProtKB-UniRule"/>
</dbReference>
<dbReference type="FunFam" id="1.10.287.3980:FF:000001">
    <property type="entry name" value="Mitochondrial ribosomal protein L34"/>
    <property type="match status" value="1"/>
</dbReference>
<dbReference type="Gene3D" id="1.10.287.3980">
    <property type="match status" value="1"/>
</dbReference>
<dbReference type="HAMAP" id="MF_00391">
    <property type="entry name" value="Ribosomal_bL34"/>
    <property type="match status" value="1"/>
</dbReference>
<dbReference type="InterPro" id="IPR000271">
    <property type="entry name" value="Ribosomal_bL34"/>
</dbReference>
<dbReference type="InterPro" id="IPR020939">
    <property type="entry name" value="Ribosomal_bL34_CS"/>
</dbReference>
<dbReference type="NCBIfam" id="TIGR01030">
    <property type="entry name" value="rpmH_bact"/>
    <property type="match status" value="1"/>
</dbReference>
<dbReference type="PANTHER" id="PTHR14503:SF4">
    <property type="entry name" value="LARGE RIBOSOMAL SUBUNIT PROTEIN BL34M"/>
    <property type="match status" value="1"/>
</dbReference>
<dbReference type="PANTHER" id="PTHR14503">
    <property type="entry name" value="MITOCHONDRIAL RIBOSOMAL PROTEIN 34 FAMILY MEMBER"/>
    <property type="match status" value="1"/>
</dbReference>
<dbReference type="Pfam" id="PF00468">
    <property type="entry name" value="Ribosomal_L34"/>
    <property type="match status" value="1"/>
</dbReference>
<dbReference type="PROSITE" id="PS00784">
    <property type="entry name" value="RIBOSOMAL_L34"/>
    <property type="match status" value="1"/>
</dbReference>
<feature type="chain" id="PRO_1000013277" description="Large ribosomal subunit protein bL34">
    <location>
        <begin position="1"/>
        <end position="44"/>
    </location>
</feature>
<feature type="region of interest" description="Disordered" evidence="2">
    <location>
        <begin position="1"/>
        <end position="44"/>
    </location>
</feature>
<feature type="compositionally biased region" description="Basic residues" evidence="2">
    <location>
        <begin position="1"/>
        <end position="19"/>
    </location>
</feature>
<feature type="compositionally biased region" description="Basic residues" evidence="2">
    <location>
        <begin position="31"/>
        <end position="44"/>
    </location>
</feature>
<organism>
    <name type="scientific">Bacillus anthracis</name>
    <dbReference type="NCBI Taxonomy" id="1392"/>
    <lineage>
        <taxon>Bacteria</taxon>
        <taxon>Bacillati</taxon>
        <taxon>Bacillota</taxon>
        <taxon>Bacilli</taxon>
        <taxon>Bacillales</taxon>
        <taxon>Bacillaceae</taxon>
        <taxon>Bacillus</taxon>
        <taxon>Bacillus cereus group</taxon>
    </lineage>
</organism>
<gene>
    <name evidence="1" type="primary">rpmH</name>
    <name type="ordered locus">BA_5738</name>
    <name type="ordered locus">GBAA_5738</name>
    <name type="ordered locus">BAS5341</name>
</gene>
<protein>
    <recommendedName>
        <fullName evidence="1">Large ribosomal subunit protein bL34</fullName>
    </recommendedName>
    <alternativeName>
        <fullName evidence="3">50S ribosomal protein L34</fullName>
    </alternativeName>
</protein>
<evidence type="ECO:0000255" key="1">
    <source>
        <dbReference type="HAMAP-Rule" id="MF_00391"/>
    </source>
</evidence>
<evidence type="ECO:0000256" key="2">
    <source>
        <dbReference type="SAM" id="MobiDB-lite"/>
    </source>
</evidence>
<evidence type="ECO:0000305" key="3"/>
<proteinExistence type="inferred from homology"/>
<keyword id="KW-1185">Reference proteome</keyword>
<keyword id="KW-0687">Ribonucleoprotein</keyword>
<keyword id="KW-0689">Ribosomal protein</keyword>
<comment type="similarity">
    <text evidence="1">Belongs to the bacterial ribosomal protein bL34 family.</text>
</comment>